<name>RLMH_FLAPJ</name>
<gene>
    <name evidence="1" type="primary">rlmH</name>
    <name type="ordered locus">FP1860</name>
</gene>
<accession>A6H0Q2</accession>
<proteinExistence type="inferred from homology"/>
<protein>
    <recommendedName>
        <fullName evidence="1">Ribosomal RNA large subunit methyltransferase H</fullName>
        <ecNumber evidence="1">2.1.1.177</ecNumber>
    </recommendedName>
    <alternativeName>
        <fullName evidence="1">23S rRNA (pseudouridine1915-N3)-methyltransferase</fullName>
    </alternativeName>
    <alternativeName>
        <fullName evidence="1">23S rRNA m3Psi1915 methyltransferase</fullName>
    </alternativeName>
    <alternativeName>
        <fullName evidence="1">rRNA (pseudouridine-N3-)-methyltransferase RlmH</fullName>
    </alternativeName>
</protein>
<reference key="1">
    <citation type="journal article" date="2007" name="Nat. Biotechnol.">
        <title>Complete genome sequence of the fish pathogen Flavobacterium psychrophilum.</title>
        <authorList>
            <person name="Duchaud E."/>
            <person name="Boussaha M."/>
            <person name="Loux V."/>
            <person name="Bernardet J.-F."/>
            <person name="Michel C."/>
            <person name="Kerouault B."/>
            <person name="Mondot S."/>
            <person name="Nicolas P."/>
            <person name="Bossy R."/>
            <person name="Caron C."/>
            <person name="Bessieres P."/>
            <person name="Gibrat J.-F."/>
            <person name="Claverol S."/>
            <person name="Dumetz F."/>
            <person name="Le Henaff M."/>
            <person name="Benmansour A."/>
        </authorList>
    </citation>
    <scope>NUCLEOTIDE SEQUENCE [LARGE SCALE GENOMIC DNA]</scope>
    <source>
        <strain>ATCC 49511 / DSM 21280 / CIP 103535 / JIP02/86</strain>
    </source>
</reference>
<sequence length="157" mass="18123">MNIKLIAIGKTDNKNLQTLIDDYTKRLSFYIKFDLEIIADIKNVKNLSETQQKEKEGELILSKITPTDQLILLDENGKTFSSVAFSDQLQKKMNSGIKTLVFVIGGPYGFSDDVYKKTFGKISLSQMTFSHQMVRLFFIEQLYRGFTILKNEPYHHQ</sequence>
<keyword id="KW-0963">Cytoplasm</keyword>
<keyword id="KW-0489">Methyltransferase</keyword>
<keyword id="KW-1185">Reference proteome</keyword>
<keyword id="KW-0698">rRNA processing</keyword>
<keyword id="KW-0949">S-adenosyl-L-methionine</keyword>
<keyword id="KW-0808">Transferase</keyword>
<comment type="function">
    <text evidence="1">Specifically methylates the pseudouridine at position 1915 (m3Psi1915) in 23S rRNA.</text>
</comment>
<comment type="catalytic activity">
    <reaction evidence="1">
        <text>pseudouridine(1915) in 23S rRNA + S-adenosyl-L-methionine = N(3)-methylpseudouridine(1915) in 23S rRNA + S-adenosyl-L-homocysteine + H(+)</text>
        <dbReference type="Rhea" id="RHEA:42752"/>
        <dbReference type="Rhea" id="RHEA-COMP:10221"/>
        <dbReference type="Rhea" id="RHEA-COMP:10222"/>
        <dbReference type="ChEBI" id="CHEBI:15378"/>
        <dbReference type="ChEBI" id="CHEBI:57856"/>
        <dbReference type="ChEBI" id="CHEBI:59789"/>
        <dbReference type="ChEBI" id="CHEBI:65314"/>
        <dbReference type="ChEBI" id="CHEBI:74486"/>
        <dbReference type="EC" id="2.1.1.177"/>
    </reaction>
</comment>
<comment type="subunit">
    <text evidence="1">Homodimer.</text>
</comment>
<comment type="subcellular location">
    <subcellularLocation>
        <location evidence="1">Cytoplasm</location>
    </subcellularLocation>
</comment>
<comment type="similarity">
    <text evidence="1">Belongs to the RNA methyltransferase RlmH family.</text>
</comment>
<dbReference type="EC" id="2.1.1.177" evidence="1"/>
<dbReference type="EMBL" id="AM398681">
    <property type="protein sequence ID" value="CAL43926.1"/>
    <property type="molecule type" value="Genomic_DNA"/>
</dbReference>
<dbReference type="RefSeq" id="WP_011963965.1">
    <property type="nucleotide sequence ID" value="NC_009613.3"/>
</dbReference>
<dbReference type="RefSeq" id="YP_001296729.1">
    <property type="nucleotide sequence ID" value="NC_009613.3"/>
</dbReference>
<dbReference type="SMR" id="A6H0Q2"/>
<dbReference type="STRING" id="402612.FP1860"/>
<dbReference type="EnsemblBacteria" id="CAL43926">
    <property type="protein sequence ID" value="CAL43926"/>
    <property type="gene ID" value="FP1860"/>
</dbReference>
<dbReference type="GeneID" id="66551956"/>
<dbReference type="KEGG" id="fps:FP1860"/>
<dbReference type="PATRIC" id="fig|402612.5.peg.1886"/>
<dbReference type="eggNOG" id="COG1576">
    <property type="taxonomic scope" value="Bacteria"/>
</dbReference>
<dbReference type="HOGENOM" id="CLU_100552_2_0_10"/>
<dbReference type="OrthoDB" id="9806643at2"/>
<dbReference type="Proteomes" id="UP000006394">
    <property type="component" value="Chromosome"/>
</dbReference>
<dbReference type="GO" id="GO:0005737">
    <property type="term" value="C:cytoplasm"/>
    <property type="evidence" value="ECO:0007669"/>
    <property type="project" value="UniProtKB-SubCell"/>
</dbReference>
<dbReference type="GO" id="GO:0070038">
    <property type="term" value="F:rRNA (pseudouridine-N3-)-methyltransferase activity"/>
    <property type="evidence" value="ECO:0007669"/>
    <property type="project" value="UniProtKB-UniRule"/>
</dbReference>
<dbReference type="CDD" id="cd18081">
    <property type="entry name" value="RlmH-like"/>
    <property type="match status" value="1"/>
</dbReference>
<dbReference type="Gene3D" id="3.40.1280.10">
    <property type="match status" value="1"/>
</dbReference>
<dbReference type="HAMAP" id="MF_00658">
    <property type="entry name" value="23SrRNA_methyltr_H"/>
    <property type="match status" value="1"/>
</dbReference>
<dbReference type="InterPro" id="IPR029028">
    <property type="entry name" value="Alpha/beta_knot_MTases"/>
</dbReference>
<dbReference type="InterPro" id="IPR003742">
    <property type="entry name" value="RlmH-like"/>
</dbReference>
<dbReference type="InterPro" id="IPR029026">
    <property type="entry name" value="tRNA_m1G_MTases_N"/>
</dbReference>
<dbReference type="NCBIfam" id="NF000990">
    <property type="entry name" value="PRK00103.2-4"/>
    <property type="match status" value="1"/>
</dbReference>
<dbReference type="PANTHER" id="PTHR33603">
    <property type="entry name" value="METHYLTRANSFERASE"/>
    <property type="match status" value="1"/>
</dbReference>
<dbReference type="PANTHER" id="PTHR33603:SF1">
    <property type="entry name" value="RIBOSOMAL RNA LARGE SUBUNIT METHYLTRANSFERASE H"/>
    <property type="match status" value="1"/>
</dbReference>
<dbReference type="Pfam" id="PF02590">
    <property type="entry name" value="SPOUT_MTase"/>
    <property type="match status" value="1"/>
</dbReference>
<dbReference type="PIRSF" id="PIRSF004505">
    <property type="entry name" value="MT_bac"/>
    <property type="match status" value="1"/>
</dbReference>
<dbReference type="SUPFAM" id="SSF75217">
    <property type="entry name" value="alpha/beta knot"/>
    <property type="match status" value="1"/>
</dbReference>
<evidence type="ECO:0000255" key="1">
    <source>
        <dbReference type="HAMAP-Rule" id="MF_00658"/>
    </source>
</evidence>
<organism>
    <name type="scientific">Flavobacterium psychrophilum (strain ATCC 49511 / DSM 21280 / CIP 103535 / JIP02/86)</name>
    <dbReference type="NCBI Taxonomy" id="402612"/>
    <lineage>
        <taxon>Bacteria</taxon>
        <taxon>Pseudomonadati</taxon>
        <taxon>Bacteroidota</taxon>
        <taxon>Flavobacteriia</taxon>
        <taxon>Flavobacteriales</taxon>
        <taxon>Flavobacteriaceae</taxon>
        <taxon>Flavobacterium</taxon>
    </lineage>
</organism>
<feature type="chain" id="PRO_1000061784" description="Ribosomal RNA large subunit methyltransferase H">
    <location>
        <begin position="1"/>
        <end position="157"/>
    </location>
</feature>
<feature type="binding site" evidence="1">
    <location>
        <position position="73"/>
    </location>
    <ligand>
        <name>S-adenosyl-L-methionine</name>
        <dbReference type="ChEBI" id="CHEBI:59789"/>
    </ligand>
</feature>
<feature type="binding site" evidence="1">
    <location>
        <position position="105"/>
    </location>
    <ligand>
        <name>S-adenosyl-L-methionine</name>
        <dbReference type="ChEBI" id="CHEBI:59789"/>
    </ligand>
</feature>
<feature type="binding site" evidence="1">
    <location>
        <begin position="124"/>
        <end position="129"/>
    </location>
    <ligand>
        <name>S-adenosyl-L-methionine</name>
        <dbReference type="ChEBI" id="CHEBI:59789"/>
    </ligand>
</feature>